<proteinExistence type="inferred from homology"/>
<comment type="PTM">
    <text evidence="1">The N-terminus is cleaved by ribosomal processing cysteine protease Prp.</text>
</comment>
<comment type="similarity">
    <text evidence="2">Belongs to the bacterial ribosomal protein bL27 family.</text>
</comment>
<evidence type="ECO:0000250" key="1">
    <source>
        <dbReference type="UniProtKB" id="Q2FXT0"/>
    </source>
</evidence>
<evidence type="ECO:0000255" key="2">
    <source>
        <dbReference type="HAMAP-Rule" id="MF_00539"/>
    </source>
</evidence>
<evidence type="ECO:0000305" key="3"/>
<keyword id="KW-1185">Reference proteome</keyword>
<keyword id="KW-0687">Ribonucleoprotein</keyword>
<keyword id="KW-0689">Ribosomal protein</keyword>
<accession>Q18B22</accession>
<protein>
    <recommendedName>
        <fullName evidence="2">Large ribosomal subunit protein bL27</fullName>
    </recommendedName>
    <alternativeName>
        <fullName evidence="3">50S ribosomal protein L27</fullName>
    </alternativeName>
</protein>
<gene>
    <name evidence="2" type="primary">rpmA</name>
    <name type="ordered locus">CD630_11630</name>
</gene>
<feature type="propeptide" id="PRO_0000459881" evidence="1">
    <location>
        <begin position="1"/>
        <end position="9"/>
    </location>
</feature>
<feature type="chain" id="PRO_1000128723" description="Large ribosomal subunit protein bL27">
    <location>
        <begin position="10"/>
        <end position="96"/>
    </location>
</feature>
<organism>
    <name type="scientific">Clostridioides difficile (strain 630)</name>
    <name type="common">Peptoclostridium difficile</name>
    <dbReference type="NCBI Taxonomy" id="272563"/>
    <lineage>
        <taxon>Bacteria</taxon>
        <taxon>Bacillati</taxon>
        <taxon>Bacillota</taxon>
        <taxon>Clostridia</taxon>
        <taxon>Peptostreptococcales</taxon>
        <taxon>Peptostreptococcaceae</taxon>
        <taxon>Clostridioides</taxon>
    </lineage>
</organism>
<reference key="1">
    <citation type="journal article" date="2006" name="Nat. Genet.">
        <title>The multidrug-resistant human pathogen Clostridium difficile has a highly mobile, mosaic genome.</title>
        <authorList>
            <person name="Sebaihia M."/>
            <person name="Wren B.W."/>
            <person name="Mullany P."/>
            <person name="Fairweather N.F."/>
            <person name="Minton N."/>
            <person name="Stabler R."/>
            <person name="Thomson N.R."/>
            <person name="Roberts A.P."/>
            <person name="Cerdeno-Tarraga A.M."/>
            <person name="Wang H."/>
            <person name="Holden M.T.G."/>
            <person name="Wright A."/>
            <person name="Churcher C."/>
            <person name="Quail M.A."/>
            <person name="Baker S."/>
            <person name="Bason N."/>
            <person name="Brooks K."/>
            <person name="Chillingworth T."/>
            <person name="Cronin A."/>
            <person name="Davis P."/>
            <person name="Dowd L."/>
            <person name="Fraser A."/>
            <person name="Feltwell T."/>
            <person name="Hance Z."/>
            <person name="Holroyd S."/>
            <person name="Jagels K."/>
            <person name="Moule S."/>
            <person name="Mungall K."/>
            <person name="Price C."/>
            <person name="Rabbinowitsch E."/>
            <person name="Sharp S."/>
            <person name="Simmonds M."/>
            <person name="Stevens K."/>
            <person name="Unwin L."/>
            <person name="Whithead S."/>
            <person name="Dupuy B."/>
            <person name="Dougan G."/>
            <person name="Barrell B."/>
            <person name="Parkhill J."/>
        </authorList>
    </citation>
    <scope>NUCLEOTIDE SEQUENCE [LARGE SCALE GENOMIC DNA]</scope>
    <source>
        <strain>630</strain>
    </source>
</reference>
<sequence length="96" mass="10427">MLNMNLQLLASKKGVGSSKNGRDSISKRLGVKRFDGQLVTAGSIIVRQRGTKIHPGTNVGKGSDDTLFALVDGTVKFERKDKKRKKVSIYPVAIAE</sequence>
<name>RL27_CLOD6</name>
<dbReference type="EMBL" id="AM180355">
    <property type="protein sequence ID" value="CAJ68016.1"/>
    <property type="molecule type" value="Genomic_DNA"/>
</dbReference>
<dbReference type="RefSeq" id="WP_003419086.1">
    <property type="nucleotide sequence ID" value="NZ_JAUPES010000006.1"/>
</dbReference>
<dbReference type="RefSeq" id="YP_001087655.1">
    <property type="nucleotide sequence ID" value="NC_009089.1"/>
</dbReference>
<dbReference type="SMR" id="Q18B22"/>
<dbReference type="STRING" id="272563.CD630_11630"/>
<dbReference type="EnsemblBacteria" id="CAJ68016">
    <property type="protein sequence ID" value="CAJ68016"/>
    <property type="gene ID" value="CD630_11630"/>
</dbReference>
<dbReference type="GeneID" id="66353573"/>
<dbReference type="KEGG" id="cdf:CD630_11630"/>
<dbReference type="KEGG" id="pdc:CDIF630_01310"/>
<dbReference type="PATRIC" id="fig|272563.120.peg.1213"/>
<dbReference type="eggNOG" id="COG0211">
    <property type="taxonomic scope" value="Bacteria"/>
</dbReference>
<dbReference type="OrthoDB" id="9803474at2"/>
<dbReference type="PhylomeDB" id="Q18B22"/>
<dbReference type="BioCyc" id="PDIF272563:G12WB-1293-MONOMER"/>
<dbReference type="Proteomes" id="UP000001978">
    <property type="component" value="Chromosome"/>
</dbReference>
<dbReference type="GO" id="GO:0022625">
    <property type="term" value="C:cytosolic large ribosomal subunit"/>
    <property type="evidence" value="ECO:0007669"/>
    <property type="project" value="TreeGrafter"/>
</dbReference>
<dbReference type="GO" id="GO:0003735">
    <property type="term" value="F:structural constituent of ribosome"/>
    <property type="evidence" value="ECO:0007669"/>
    <property type="project" value="InterPro"/>
</dbReference>
<dbReference type="GO" id="GO:0006412">
    <property type="term" value="P:translation"/>
    <property type="evidence" value="ECO:0007669"/>
    <property type="project" value="UniProtKB-UniRule"/>
</dbReference>
<dbReference type="FunFam" id="2.40.50.100:FF:000004">
    <property type="entry name" value="50S ribosomal protein L27"/>
    <property type="match status" value="1"/>
</dbReference>
<dbReference type="Gene3D" id="2.40.50.100">
    <property type="match status" value="1"/>
</dbReference>
<dbReference type="HAMAP" id="MF_00539">
    <property type="entry name" value="Ribosomal_bL27"/>
    <property type="match status" value="1"/>
</dbReference>
<dbReference type="InterPro" id="IPR001684">
    <property type="entry name" value="Ribosomal_bL27"/>
</dbReference>
<dbReference type="InterPro" id="IPR018261">
    <property type="entry name" value="Ribosomal_bL27_CS"/>
</dbReference>
<dbReference type="NCBIfam" id="TIGR00062">
    <property type="entry name" value="L27"/>
    <property type="match status" value="1"/>
</dbReference>
<dbReference type="PANTHER" id="PTHR15893:SF0">
    <property type="entry name" value="LARGE RIBOSOMAL SUBUNIT PROTEIN BL27M"/>
    <property type="match status" value="1"/>
</dbReference>
<dbReference type="PANTHER" id="PTHR15893">
    <property type="entry name" value="RIBOSOMAL PROTEIN L27"/>
    <property type="match status" value="1"/>
</dbReference>
<dbReference type="Pfam" id="PF01016">
    <property type="entry name" value="Ribosomal_L27"/>
    <property type="match status" value="1"/>
</dbReference>
<dbReference type="PRINTS" id="PR00063">
    <property type="entry name" value="RIBOSOMALL27"/>
</dbReference>
<dbReference type="SUPFAM" id="SSF110324">
    <property type="entry name" value="Ribosomal L27 protein-like"/>
    <property type="match status" value="1"/>
</dbReference>
<dbReference type="PROSITE" id="PS00831">
    <property type="entry name" value="RIBOSOMAL_L27"/>
    <property type="match status" value="1"/>
</dbReference>